<reference key="1">
    <citation type="journal article" date="2003" name="Mol. Microbiol.">
        <title>Genome-based analysis of virulence genes in a non-biofilm-forming Staphylococcus epidermidis strain (ATCC 12228).</title>
        <authorList>
            <person name="Zhang Y.-Q."/>
            <person name="Ren S.-X."/>
            <person name="Li H.-L."/>
            <person name="Wang Y.-X."/>
            <person name="Fu G."/>
            <person name="Yang J."/>
            <person name="Qin Z.-Q."/>
            <person name="Miao Y.-G."/>
            <person name="Wang W.-Y."/>
            <person name="Chen R.-S."/>
            <person name="Shen Y."/>
            <person name="Chen Z."/>
            <person name="Yuan Z.-H."/>
            <person name="Zhao G.-P."/>
            <person name="Qu D."/>
            <person name="Danchin A."/>
            <person name="Wen Y.-M."/>
        </authorList>
    </citation>
    <scope>NUCLEOTIDE SEQUENCE [LARGE SCALE GENOMIC DNA]</scope>
    <source>
        <strain>ATCC 12228 / FDA PCI 1200</strain>
    </source>
</reference>
<organism>
    <name type="scientific">Staphylococcus epidermidis (strain ATCC 12228 / FDA PCI 1200)</name>
    <dbReference type="NCBI Taxonomy" id="176280"/>
    <lineage>
        <taxon>Bacteria</taxon>
        <taxon>Bacillati</taxon>
        <taxon>Bacillota</taxon>
        <taxon>Bacilli</taxon>
        <taxon>Bacillales</taxon>
        <taxon>Staphylococcaceae</taxon>
        <taxon>Staphylococcus</taxon>
    </lineage>
</organism>
<protein>
    <recommendedName>
        <fullName evidence="1">Holo-[acyl-carrier-protein] synthase</fullName>
        <shortName evidence="1">Holo-ACP synthase</shortName>
        <ecNumber evidence="1">2.7.8.7</ecNumber>
    </recommendedName>
    <alternativeName>
        <fullName evidence="1">4'-phosphopantetheinyl transferase AcpS</fullName>
    </alternativeName>
</protein>
<accession>Q8CNK6</accession>
<proteinExistence type="inferred from homology"/>
<evidence type="ECO:0000255" key="1">
    <source>
        <dbReference type="HAMAP-Rule" id="MF_00101"/>
    </source>
</evidence>
<feature type="chain" id="PRO_0000175706" description="Holo-[acyl-carrier-protein] synthase">
    <location>
        <begin position="1"/>
        <end position="117"/>
    </location>
</feature>
<feature type="binding site" evidence="1">
    <location>
        <position position="8"/>
    </location>
    <ligand>
        <name>Mg(2+)</name>
        <dbReference type="ChEBI" id="CHEBI:18420"/>
    </ligand>
</feature>
<feature type="binding site" evidence="1">
    <location>
        <position position="58"/>
    </location>
    <ligand>
        <name>Mg(2+)</name>
        <dbReference type="ChEBI" id="CHEBI:18420"/>
    </ligand>
</feature>
<keyword id="KW-0963">Cytoplasm</keyword>
<keyword id="KW-0275">Fatty acid biosynthesis</keyword>
<keyword id="KW-0276">Fatty acid metabolism</keyword>
<keyword id="KW-0444">Lipid biosynthesis</keyword>
<keyword id="KW-0443">Lipid metabolism</keyword>
<keyword id="KW-0460">Magnesium</keyword>
<keyword id="KW-0479">Metal-binding</keyword>
<keyword id="KW-0808">Transferase</keyword>
<name>ACPS_STAES</name>
<dbReference type="EC" id="2.7.8.7" evidence="1"/>
<dbReference type="EMBL" id="AE015929">
    <property type="protein sequence ID" value="AAO05274.1"/>
    <property type="molecule type" value="Genomic_DNA"/>
</dbReference>
<dbReference type="RefSeq" id="NP_765230.1">
    <property type="nucleotide sequence ID" value="NC_004461.1"/>
</dbReference>
<dbReference type="RefSeq" id="WP_002457108.1">
    <property type="nucleotide sequence ID" value="NZ_WBME01000071.1"/>
</dbReference>
<dbReference type="SMR" id="Q8CNK6"/>
<dbReference type="GeneID" id="50018224"/>
<dbReference type="KEGG" id="sep:SE_1675"/>
<dbReference type="PATRIC" id="fig|176280.10.peg.1636"/>
<dbReference type="eggNOG" id="COG0736">
    <property type="taxonomic scope" value="Bacteria"/>
</dbReference>
<dbReference type="HOGENOM" id="CLU_089696_1_2_9"/>
<dbReference type="OrthoDB" id="517356at2"/>
<dbReference type="Proteomes" id="UP000001411">
    <property type="component" value="Chromosome"/>
</dbReference>
<dbReference type="GO" id="GO:0005829">
    <property type="term" value="C:cytosol"/>
    <property type="evidence" value="ECO:0007669"/>
    <property type="project" value="TreeGrafter"/>
</dbReference>
<dbReference type="GO" id="GO:0008897">
    <property type="term" value="F:holo-[acyl-carrier-protein] synthase activity"/>
    <property type="evidence" value="ECO:0007669"/>
    <property type="project" value="UniProtKB-UniRule"/>
</dbReference>
<dbReference type="GO" id="GO:0000287">
    <property type="term" value="F:magnesium ion binding"/>
    <property type="evidence" value="ECO:0007669"/>
    <property type="project" value="UniProtKB-UniRule"/>
</dbReference>
<dbReference type="GO" id="GO:0006633">
    <property type="term" value="P:fatty acid biosynthetic process"/>
    <property type="evidence" value="ECO:0007669"/>
    <property type="project" value="UniProtKB-UniRule"/>
</dbReference>
<dbReference type="GO" id="GO:0019878">
    <property type="term" value="P:lysine biosynthetic process via aminoadipic acid"/>
    <property type="evidence" value="ECO:0007669"/>
    <property type="project" value="TreeGrafter"/>
</dbReference>
<dbReference type="Gene3D" id="3.90.470.20">
    <property type="entry name" value="4'-phosphopantetheinyl transferase domain"/>
    <property type="match status" value="1"/>
</dbReference>
<dbReference type="HAMAP" id="MF_00101">
    <property type="entry name" value="AcpS"/>
    <property type="match status" value="1"/>
</dbReference>
<dbReference type="InterPro" id="IPR008278">
    <property type="entry name" value="4-PPantetheinyl_Trfase_dom"/>
</dbReference>
<dbReference type="InterPro" id="IPR037143">
    <property type="entry name" value="4-PPantetheinyl_Trfase_dom_sf"/>
</dbReference>
<dbReference type="InterPro" id="IPR002582">
    <property type="entry name" value="ACPS"/>
</dbReference>
<dbReference type="InterPro" id="IPR050559">
    <property type="entry name" value="P-Pant_transferase_sf"/>
</dbReference>
<dbReference type="InterPro" id="IPR004568">
    <property type="entry name" value="Ppantetheine-prot_Trfase_dom"/>
</dbReference>
<dbReference type="NCBIfam" id="TIGR00516">
    <property type="entry name" value="acpS"/>
    <property type="match status" value="1"/>
</dbReference>
<dbReference type="NCBIfam" id="TIGR00556">
    <property type="entry name" value="pantethn_trn"/>
    <property type="match status" value="1"/>
</dbReference>
<dbReference type="PANTHER" id="PTHR12215:SF10">
    <property type="entry name" value="L-AMINOADIPATE-SEMIALDEHYDE DEHYDROGENASE-PHOSPHOPANTETHEINYL TRANSFERASE"/>
    <property type="match status" value="1"/>
</dbReference>
<dbReference type="PANTHER" id="PTHR12215">
    <property type="entry name" value="PHOSPHOPANTETHEINE TRANSFERASE"/>
    <property type="match status" value="1"/>
</dbReference>
<dbReference type="Pfam" id="PF01648">
    <property type="entry name" value="ACPS"/>
    <property type="match status" value="1"/>
</dbReference>
<dbReference type="SUPFAM" id="SSF56214">
    <property type="entry name" value="4'-phosphopantetheinyl transferase"/>
    <property type="match status" value="1"/>
</dbReference>
<sequence>MIYGIGIDLIEIERIKNLQNQTKFIERILTIEERDKLNQYTHEQRRLEFLAGRFTVKEAFSKALGTGLGKSVSFQDINCYNDALGKPCIDYPGFYTHVSITHTENYAMSQVILEKNE</sequence>
<comment type="function">
    <text evidence="1">Transfers the 4'-phosphopantetheine moiety from coenzyme A to a Ser of acyl-carrier-protein.</text>
</comment>
<comment type="catalytic activity">
    <reaction evidence="1">
        <text>apo-[ACP] + CoA = holo-[ACP] + adenosine 3',5'-bisphosphate + H(+)</text>
        <dbReference type="Rhea" id="RHEA:12068"/>
        <dbReference type="Rhea" id="RHEA-COMP:9685"/>
        <dbReference type="Rhea" id="RHEA-COMP:9690"/>
        <dbReference type="ChEBI" id="CHEBI:15378"/>
        <dbReference type="ChEBI" id="CHEBI:29999"/>
        <dbReference type="ChEBI" id="CHEBI:57287"/>
        <dbReference type="ChEBI" id="CHEBI:58343"/>
        <dbReference type="ChEBI" id="CHEBI:64479"/>
        <dbReference type="EC" id="2.7.8.7"/>
    </reaction>
</comment>
<comment type="cofactor">
    <cofactor evidence="1">
        <name>Mg(2+)</name>
        <dbReference type="ChEBI" id="CHEBI:18420"/>
    </cofactor>
</comment>
<comment type="subcellular location">
    <subcellularLocation>
        <location evidence="1">Cytoplasm</location>
    </subcellularLocation>
</comment>
<comment type="similarity">
    <text evidence="1">Belongs to the P-Pant transferase superfamily. AcpS family.</text>
</comment>
<gene>
    <name evidence="1" type="primary">acpS</name>
    <name type="ordered locus">SE_1675</name>
</gene>